<name>PQQE_ECTM1</name>
<comment type="function">
    <text evidence="1">Catalyzes the cross-linking of a glutamate residue and a tyrosine residue in the PqqA protein as part of the biosynthesis of pyrroloquinoline quinone (PQQ).</text>
</comment>
<comment type="catalytic activity">
    <reaction evidence="1">
        <text>[PQQ precursor protein] + S-adenosyl-L-methionine = E-Y cross-linked-[PQQ precursor protein] + 5'-deoxyadenosine + L-methionine + H(+)</text>
        <dbReference type="Rhea" id="RHEA:56836"/>
        <dbReference type="Rhea" id="RHEA-COMP:14800"/>
        <dbReference type="Rhea" id="RHEA-COMP:14801"/>
        <dbReference type="ChEBI" id="CHEBI:15378"/>
        <dbReference type="ChEBI" id="CHEBI:17319"/>
        <dbReference type="ChEBI" id="CHEBI:57844"/>
        <dbReference type="ChEBI" id="CHEBI:59789"/>
        <dbReference type="ChEBI" id="CHEBI:141026"/>
        <dbReference type="ChEBI" id="CHEBI:141027"/>
        <dbReference type="EC" id="1.21.98.4"/>
    </reaction>
</comment>
<comment type="cofactor">
    <cofactor evidence="1">
        <name>[4Fe-4S] cluster</name>
        <dbReference type="ChEBI" id="CHEBI:49883"/>
    </cofactor>
    <text evidence="1">Binds 1 [4Fe-4S] cluster. The cluster is coordinated with 3 cysteines and an exchangeable S-adenosyl-L-methionine.</text>
</comment>
<comment type="pathway">
    <text evidence="1">Cofactor biosynthesis; pyrroloquinoline quinone biosynthesis.</text>
</comment>
<comment type="subunit">
    <text evidence="1">Interacts with PqqD. The interaction is necessary for activity of PqqE.</text>
</comment>
<comment type="similarity">
    <text evidence="1">Belongs to the radical SAM superfamily. PqqE family.</text>
</comment>
<evidence type="ECO:0000255" key="1">
    <source>
        <dbReference type="HAMAP-Rule" id="MF_00660"/>
    </source>
</evidence>
<evidence type="ECO:0000255" key="2">
    <source>
        <dbReference type="PROSITE-ProRule" id="PRU01266"/>
    </source>
</evidence>
<reference key="1">
    <citation type="submission" date="2007-04" db="EMBL/GenBank/DDBJ databases">
        <title>Complete sequence of Pseudomonas mendocina ymp.</title>
        <authorList>
            <consortium name="US DOE Joint Genome Institute"/>
            <person name="Copeland A."/>
            <person name="Lucas S."/>
            <person name="Lapidus A."/>
            <person name="Barry K."/>
            <person name="Glavina del Rio T."/>
            <person name="Dalin E."/>
            <person name="Tice H."/>
            <person name="Pitluck S."/>
            <person name="Kiss H."/>
            <person name="Brettin T."/>
            <person name="Detter J.C."/>
            <person name="Bruce D."/>
            <person name="Han C."/>
            <person name="Schmutz J."/>
            <person name="Larimer F."/>
            <person name="Land M."/>
            <person name="Hauser L."/>
            <person name="Kyrpides N."/>
            <person name="Mikhailova N."/>
            <person name="Hersman L."/>
            <person name="Dubois J."/>
            <person name="Maurice P."/>
            <person name="Richardson P."/>
        </authorList>
    </citation>
    <scope>NUCLEOTIDE SEQUENCE [LARGE SCALE GENOMIC DNA]</scope>
    <source>
        <strain>ymp</strain>
    </source>
</reference>
<feature type="chain" id="PRO_1000131282" description="PqqA peptide cyclase">
    <location>
        <begin position="1"/>
        <end position="384"/>
    </location>
</feature>
<feature type="domain" description="Radical SAM core" evidence="2">
    <location>
        <begin position="15"/>
        <end position="231"/>
    </location>
</feature>
<feature type="binding site" evidence="1">
    <location>
        <position position="29"/>
    </location>
    <ligand>
        <name>[4Fe-4S] cluster</name>
        <dbReference type="ChEBI" id="CHEBI:49883"/>
        <note>4Fe-4S-S-AdoMet</note>
    </ligand>
</feature>
<feature type="binding site" evidence="1">
    <location>
        <position position="33"/>
    </location>
    <ligand>
        <name>[4Fe-4S] cluster</name>
        <dbReference type="ChEBI" id="CHEBI:49883"/>
        <note>4Fe-4S-S-AdoMet</note>
    </ligand>
</feature>
<feature type="binding site" evidence="1">
    <location>
        <position position="36"/>
    </location>
    <ligand>
        <name>[4Fe-4S] cluster</name>
        <dbReference type="ChEBI" id="CHEBI:49883"/>
        <note>4Fe-4S-S-AdoMet</note>
    </ligand>
</feature>
<organism>
    <name type="scientific">Ectopseudomonas mendocina (strain ymp)</name>
    <name type="common">Pseudomonas mendocina</name>
    <dbReference type="NCBI Taxonomy" id="399739"/>
    <lineage>
        <taxon>Bacteria</taxon>
        <taxon>Pseudomonadati</taxon>
        <taxon>Pseudomonadota</taxon>
        <taxon>Gammaproteobacteria</taxon>
        <taxon>Pseudomonadales</taxon>
        <taxon>Pseudomonadaceae</taxon>
        <taxon>Ectopseudomonas</taxon>
    </lineage>
</organism>
<protein>
    <recommendedName>
        <fullName evidence="1">PqqA peptide cyclase</fullName>
        <ecNumber evidence="1">1.21.98.4</ecNumber>
    </recommendedName>
    <alternativeName>
        <fullName evidence="1">Coenzyme PQQ synthesis protein E</fullName>
    </alternativeName>
    <alternativeName>
        <fullName evidence="1">Pyrroloquinoline quinone biosynthesis protein E</fullName>
    </alternativeName>
</protein>
<gene>
    <name evidence="1" type="primary">pqqE</name>
    <name type="ordered locus">Pmen_1969</name>
</gene>
<keyword id="KW-0004">4Fe-4S</keyword>
<keyword id="KW-0408">Iron</keyword>
<keyword id="KW-0411">Iron-sulfur</keyword>
<keyword id="KW-0479">Metal-binding</keyword>
<keyword id="KW-0560">Oxidoreductase</keyword>
<keyword id="KW-0884">PQQ biosynthesis</keyword>
<keyword id="KW-0949">S-adenosyl-L-methionine</keyword>
<accession>A4XTR4</accession>
<dbReference type="EC" id="1.21.98.4" evidence="1"/>
<dbReference type="EMBL" id="CP000680">
    <property type="protein sequence ID" value="ABP84730.1"/>
    <property type="molecule type" value="Genomic_DNA"/>
</dbReference>
<dbReference type="SMR" id="A4XTR4"/>
<dbReference type="STRING" id="399739.Pmen_1969"/>
<dbReference type="KEGG" id="pmy:Pmen_1969"/>
<dbReference type="PATRIC" id="fig|399739.8.peg.1995"/>
<dbReference type="eggNOG" id="COG0535">
    <property type="taxonomic scope" value="Bacteria"/>
</dbReference>
<dbReference type="HOGENOM" id="CLU_009273_4_7_6"/>
<dbReference type="OrthoDB" id="9792276at2"/>
<dbReference type="UniPathway" id="UPA00539"/>
<dbReference type="GO" id="GO:0051539">
    <property type="term" value="F:4 iron, 4 sulfur cluster binding"/>
    <property type="evidence" value="ECO:0007669"/>
    <property type="project" value="UniProtKB-KW"/>
</dbReference>
<dbReference type="GO" id="GO:0009975">
    <property type="term" value="F:cyclase activity"/>
    <property type="evidence" value="ECO:0007669"/>
    <property type="project" value="UniProtKB-UniRule"/>
</dbReference>
<dbReference type="GO" id="GO:0005506">
    <property type="term" value="F:iron ion binding"/>
    <property type="evidence" value="ECO:0007669"/>
    <property type="project" value="UniProtKB-UniRule"/>
</dbReference>
<dbReference type="GO" id="GO:0016491">
    <property type="term" value="F:oxidoreductase activity"/>
    <property type="evidence" value="ECO:0007669"/>
    <property type="project" value="UniProtKB-KW"/>
</dbReference>
<dbReference type="GO" id="GO:1904047">
    <property type="term" value="F:S-adenosyl-L-methionine binding"/>
    <property type="evidence" value="ECO:0007669"/>
    <property type="project" value="UniProtKB-UniRule"/>
</dbReference>
<dbReference type="GO" id="GO:0018189">
    <property type="term" value="P:pyrroloquinoline quinone biosynthetic process"/>
    <property type="evidence" value="ECO:0007669"/>
    <property type="project" value="UniProtKB-UniRule"/>
</dbReference>
<dbReference type="CDD" id="cd01335">
    <property type="entry name" value="Radical_SAM"/>
    <property type="match status" value="1"/>
</dbReference>
<dbReference type="CDD" id="cd21119">
    <property type="entry name" value="SPASM_PqqE"/>
    <property type="match status" value="1"/>
</dbReference>
<dbReference type="Gene3D" id="3.20.20.70">
    <property type="entry name" value="Aldolase class I"/>
    <property type="match status" value="1"/>
</dbReference>
<dbReference type="HAMAP" id="MF_00660">
    <property type="entry name" value="PqqE"/>
    <property type="match status" value="1"/>
</dbReference>
<dbReference type="InterPro" id="IPR023885">
    <property type="entry name" value="4Fe4S-binding_SPASM_dom"/>
</dbReference>
<dbReference type="InterPro" id="IPR013785">
    <property type="entry name" value="Aldolase_TIM"/>
</dbReference>
<dbReference type="InterPro" id="IPR006638">
    <property type="entry name" value="Elp3/MiaA/NifB-like_rSAM"/>
</dbReference>
<dbReference type="InterPro" id="IPR000385">
    <property type="entry name" value="MoaA_NifB_PqqE_Fe-S-bd_CS"/>
</dbReference>
<dbReference type="InterPro" id="IPR011843">
    <property type="entry name" value="PQQ_synth_PqqE_bac"/>
</dbReference>
<dbReference type="InterPro" id="IPR017200">
    <property type="entry name" value="PqqE-like"/>
</dbReference>
<dbReference type="InterPro" id="IPR050377">
    <property type="entry name" value="Radical_SAM_PqqE_MftC-like"/>
</dbReference>
<dbReference type="InterPro" id="IPR007197">
    <property type="entry name" value="rSAM"/>
</dbReference>
<dbReference type="NCBIfam" id="TIGR02109">
    <property type="entry name" value="PQQ_syn_pqqE"/>
    <property type="match status" value="1"/>
</dbReference>
<dbReference type="NCBIfam" id="TIGR04085">
    <property type="entry name" value="rSAM_more_4Fe4S"/>
    <property type="match status" value="1"/>
</dbReference>
<dbReference type="PANTHER" id="PTHR11228:SF7">
    <property type="entry name" value="PQQA PEPTIDE CYCLASE"/>
    <property type="match status" value="1"/>
</dbReference>
<dbReference type="PANTHER" id="PTHR11228">
    <property type="entry name" value="RADICAL SAM DOMAIN PROTEIN"/>
    <property type="match status" value="1"/>
</dbReference>
<dbReference type="Pfam" id="PF13353">
    <property type="entry name" value="Fer4_12"/>
    <property type="match status" value="1"/>
</dbReference>
<dbReference type="Pfam" id="PF04055">
    <property type="entry name" value="Radical_SAM"/>
    <property type="match status" value="1"/>
</dbReference>
<dbReference type="Pfam" id="PF13186">
    <property type="entry name" value="SPASM"/>
    <property type="match status" value="1"/>
</dbReference>
<dbReference type="PIRSF" id="PIRSF037420">
    <property type="entry name" value="PQQ_syn_pqqE"/>
    <property type="match status" value="1"/>
</dbReference>
<dbReference type="SFLD" id="SFLDF00280">
    <property type="entry name" value="coenzyme_PQQ_synthesis_protein"/>
    <property type="match status" value="1"/>
</dbReference>
<dbReference type="SFLD" id="SFLDS00029">
    <property type="entry name" value="Radical_SAM"/>
    <property type="match status" value="1"/>
</dbReference>
<dbReference type="SMART" id="SM00729">
    <property type="entry name" value="Elp3"/>
    <property type="match status" value="1"/>
</dbReference>
<dbReference type="SUPFAM" id="SSF102114">
    <property type="entry name" value="Radical SAM enzymes"/>
    <property type="match status" value="1"/>
</dbReference>
<dbReference type="PROSITE" id="PS01305">
    <property type="entry name" value="MOAA_NIFB_PQQE"/>
    <property type="match status" value="1"/>
</dbReference>
<dbReference type="PROSITE" id="PS51918">
    <property type="entry name" value="RADICAL_SAM"/>
    <property type="match status" value="1"/>
</dbReference>
<proteinExistence type="inferred from homology"/>
<sequence>MHSSGSSFAKAGHEPGPPLWLLAELTYRCPLQCPYCSNPLDFAKQGAELSTAEWIEVFRQARELGAAQLGFSGGEPLVRQDLAELIAAARGLGYYTNLITSGIGLTEARIAEFADAGLDHIQISFQAADEEVNNLLAGSKKAFAQKLAMARAVKAHGYPMVLNFVTHRHNIDNIERIIELCLELEADFVELATCQFYGWAELNRAGLLPTRAQLERAERITNQWRDKLAAENHPCKLIFVTPDYYEERPKACMNGWGNLFLDITPDGTALPCHSARQLPVQFPNVREHSVEHIWRHSFGFNRFRGDDWMPEPCRSCDEKHKDFGGCRCQAFMLTGDASNADPVCSKSAHHEVILAARRQADEAPLGLGELQYRNDKASRIICKA</sequence>